<evidence type="ECO:0000255" key="1">
    <source>
        <dbReference type="HAMAP-Rule" id="MF_00354"/>
    </source>
</evidence>
<evidence type="ECO:0000269" key="2">
    <source>
    </source>
</evidence>
<accession>Q58272</accession>
<feature type="chain" id="PRO_0000134444" description="Isopentenyl-diphosphate delta-isomerase">
    <location>
        <begin position="1"/>
        <end position="359"/>
    </location>
</feature>
<feature type="binding site" evidence="1">
    <location>
        <begin position="11"/>
        <end position="12"/>
    </location>
    <ligand>
        <name>substrate</name>
    </ligand>
</feature>
<feature type="binding site" evidence="1">
    <location>
        <position position="68"/>
    </location>
    <ligand>
        <name>FMN</name>
        <dbReference type="ChEBI" id="CHEBI:58210"/>
    </ligand>
</feature>
<feature type="binding site" evidence="1">
    <location>
        <begin position="69"/>
        <end position="71"/>
    </location>
    <ligand>
        <name>FMN</name>
        <dbReference type="ChEBI" id="CHEBI:58210"/>
    </ligand>
</feature>
<feature type="binding site" evidence="1">
    <location>
        <begin position="99"/>
        <end position="101"/>
    </location>
    <ligand>
        <name>substrate</name>
    </ligand>
</feature>
<feature type="binding site" evidence="1">
    <location>
        <position position="99"/>
    </location>
    <ligand>
        <name>FMN</name>
        <dbReference type="ChEBI" id="CHEBI:58210"/>
    </ligand>
</feature>
<feature type="binding site" evidence="1">
    <location>
        <position position="127"/>
    </location>
    <ligand>
        <name>FMN</name>
        <dbReference type="ChEBI" id="CHEBI:58210"/>
    </ligand>
</feature>
<feature type="binding site" evidence="1">
    <location>
        <position position="163"/>
    </location>
    <ligand>
        <name>substrate</name>
    </ligand>
</feature>
<feature type="binding site" evidence="1">
    <location>
        <position position="164"/>
    </location>
    <ligand>
        <name>Mg(2+)</name>
        <dbReference type="ChEBI" id="CHEBI:18420"/>
    </ligand>
</feature>
<feature type="binding site" evidence="1">
    <location>
        <position position="199"/>
    </location>
    <ligand>
        <name>FMN</name>
        <dbReference type="ChEBI" id="CHEBI:58210"/>
    </ligand>
</feature>
<feature type="binding site" evidence="1">
    <location>
        <position position="229"/>
    </location>
    <ligand>
        <name>FMN</name>
        <dbReference type="ChEBI" id="CHEBI:58210"/>
    </ligand>
</feature>
<feature type="binding site" evidence="1">
    <location>
        <begin position="278"/>
        <end position="280"/>
    </location>
    <ligand>
        <name>FMN</name>
        <dbReference type="ChEBI" id="CHEBI:58210"/>
    </ligand>
</feature>
<feature type="binding site" evidence="1">
    <location>
        <begin position="299"/>
        <end position="300"/>
    </location>
    <ligand>
        <name>FMN</name>
        <dbReference type="ChEBI" id="CHEBI:58210"/>
    </ligand>
</feature>
<comment type="function">
    <text evidence="1 2">Involved in the biosynthesis of isoprenoids. Catalyzes the 1,3-allylic rearrangement of the homoallylic substrate isopentenyl (IPP) to its allylic isomer, dimethylallyl diphosphate (DMAPP).</text>
</comment>
<comment type="catalytic activity">
    <reaction evidence="1 2">
        <text>isopentenyl diphosphate = dimethylallyl diphosphate</text>
        <dbReference type="Rhea" id="RHEA:23284"/>
        <dbReference type="ChEBI" id="CHEBI:57623"/>
        <dbReference type="ChEBI" id="CHEBI:128769"/>
        <dbReference type="EC" id="5.3.3.2"/>
    </reaction>
</comment>
<comment type="cofactor">
    <cofactor evidence="1 2">
        <name>FMN</name>
        <dbReference type="ChEBI" id="CHEBI:58210"/>
    </cofactor>
</comment>
<comment type="cofactor">
    <cofactor evidence="1 2">
        <name>NADPH</name>
        <dbReference type="ChEBI" id="CHEBI:57783"/>
    </cofactor>
</comment>
<comment type="cofactor">
    <cofactor evidence="1">
        <name>Mg(2+)</name>
        <dbReference type="ChEBI" id="CHEBI:18420"/>
    </cofactor>
</comment>
<comment type="activity regulation">
    <text evidence="2">Inhibited by 3,4-epoxy-3-methylbutyl diphosphate (EIPP).</text>
</comment>
<comment type="biophysicochemical properties">
    <kinetics>
        <KM evidence="2">15.3 mM for IPP</KM>
        <text>kcat is 191 sec(-1) for isomerase activity with IPP.</text>
    </kinetics>
    <phDependence>
        <text evidence="2">Optimum pH is between 7 and 7.2.</text>
    </phDependence>
    <temperatureDependence>
        <text evidence="2">Optimum temperature is between 85 and 95 degrees Celsius.</text>
    </temperatureDependence>
</comment>
<comment type="subunit">
    <text evidence="1">Homooctamer. Dimer of tetramers.</text>
</comment>
<comment type="subcellular location">
    <subcellularLocation>
        <location evidence="1">Cytoplasm</location>
    </subcellularLocation>
</comment>
<comment type="similarity">
    <text evidence="1">Belongs to the IPP isomerase type 2 family.</text>
</comment>
<organism>
    <name type="scientific">Methanocaldococcus jannaschii (strain ATCC 43067 / DSM 2661 / JAL-1 / JCM 10045 / NBRC 100440)</name>
    <name type="common">Methanococcus jannaschii</name>
    <dbReference type="NCBI Taxonomy" id="243232"/>
    <lineage>
        <taxon>Archaea</taxon>
        <taxon>Methanobacteriati</taxon>
        <taxon>Methanobacteriota</taxon>
        <taxon>Methanomada group</taxon>
        <taxon>Methanococci</taxon>
        <taxon>Methanococcales</taxon>
        <taxon>Methanocaldococcaceae</taxon>
        <taxon>Methanocaldococcus</taxon>
    </lineage>
</organism>
<name>IDI2_METJA</name>
<reference key="1">
    <citation type="journal article" date="1996" name="Science">
        <title>Complete genome sequence of the methanogenic archaeon, Methanococcus jannaschii.</title>
        <authorList>
            <person name="Bult C.J."/>
            <person name="White O."/>
            <person name="Olsen G.J."/>
            <person name="Zhou L."/>
            <person name="Fleischmann R.D."/>
            <person name="Sutton G.G."/>
            <person name="Blake J.A."/>
            <person name="FitzGerald L.M."/>
            <person name="Clayton R.A."/>
            <person name="Gocayne J.D."/>
            <person name="Kerlavage A.R."/>
            <person name="Dougherty B.A."/>
            <person name="Tomb J.-F."/>
            <person name="Adams M.D."/>
            <person name="Reich C.I."/>
            <person name="Overbeek R."/>
            <person name="Kirkness E.F."/>
            <person name="Weinstock K.G."/>
            <person name="Merrick J.M."/>
            <person name="Glodek A."/>
            <person name="Scott J.L."/>
            <person name="Geoghagen N.S.M."/>
            <person name="Weidman J.F."/>
            <person name="Fuhrmann J.L."/>
            <person name="Nguyen D."/>
            <person name="Utterback T.R."/>
            <person name="Kelley J.M."/>
            <person name="Peterson J.D."/>
            <person name="Sadow P.W."/>
            <person name="Hanna M.C."/>
            <person name="Cotton M.D."/>
            <person name="Roberts K.M."/>
            <person name="Hurst M.A."/>
            <person name="Kaine B.P."/>
            <person name="Borodovsky M."/>
            <person name="Klenk H.-P."/>
            <person name="Fraser C.M."/>
            <person name="Smith H.O."/>
            <person name="Woese C.R."/>
            <person name="Venter J.C."/>
        </authorList>
    </citation>
    <scope>NUCLEOTIDE SEQUENCE [LARGE SCALE GENOMIC DNA]</scope>
    <source>
        <strain>ATCC 43067 / DSM 2661 / JAL-1 / JCM 10045 / NBRC 100440</strain>
    </source>
</reference>
<reference key="2">
    <citation type="journal article" date="2006" name="Bioorg. Med. Chem.">
        <title>Inhibition of type 2 isopentenyl diphosphate isomerase from Methanocaldococcus jannaschii by a mechanism-based inhibitor of type 1 isopentenyl diphosphate isomerase.</title>
        <authorList>
            <person name="Hoshino T."/>
            <person name="Tamegai H."/>
            <person name="Kakinuma K."/>
            <person name="Eguchi T."/>
        </authorList>
    </citation>
    <scope>FUNCTION</scope>
    <scope>CATALYTIC ACTIVITY</scope>
    <scope>BIOPHYSICOCHEMICAL PROPERTIES</scope>
    <scope>ACTIVITY REGULATION</scope>
    <scope>COFACTOR</scope>
    <source>
        <strain>ATCC 43067 / DSM 2661 / JAL-1 / JCM 10045 / NBRC 100440</strain>
    </source>
</reference>
<reference key="3">
    <citation type="journal article" date="2011" name="Acta Crystallogr. F">
        <title>Crystallization and preliminary X-ray analysis of isopentenyl diphosphate isomerase from Methanocaldococcus jannaschii.</title>
        <authorList>
            <person name="Hoshino T."/>
            <person name="Nango E."/>
            <person name="Baba S."/>
            <person name="Eguchi T."/>
            <person name="Kumasaka T."/>
        </authorList>
    </citation>
    <scope>CRYSTALLIZATION</scope>
</reference>
<gene>
    <name evidence="1" type="primary">fni</name>
    <name type="ordered locus">MJ0862</name>
</gene>
<sequence>MVNNRNEIEVRKLEHIFLCSYCNVEYEKTTLLEDIELIHKGTCGINFNDIETEIELFGKKLSAPIIVSGMTGGHSKAKEINKNIAKAVEELGLGMGVGSQRAAIVNDELIDTYSIVRDYTNNLVIGNLGAVNFIVDDWDEEIIDKAIEMIDADAIAIHFNPLQEIIQPEGDLNFKNLYKLKEIISNYKKSYKNIPFIAKQVGEGFSKEDALILKDIGFDAIDVQGSGGTSWAKVEIYRVKEEEIKRLAEKFANWGIPTAASIFEVKSVYDGIVIGSGGIRGGLDIAKCIAIGCDCCSVALPILKASLKGWEEVVKVLESYIKELKIAMFLVGAENIEELKKTSYIVKGTLKEWISQRLK</sequence>
<dbReference type="EC" id="5.3.3.2" evidence="1"/>
<dbReference type="EMBL" id="L77117">
    <property type="protein sequence ID" value="AAB98867.1"/>
    <property type="molecule type" value="Genomic_DNA"/>
</dbReference>
<dbReference type="PIR" id="F64407">
    <property type="entry name" value="F64407"/>
</dbReference>
<dbReference type="RefSeq" id="WP_010870377.1">
    <property type="nucleotide sequence ID" value="NC_000909.1"/>
</dbReference>
<dbReference type="SMR" id="Q58272"/>
<dbReference type="FunCoup" id="Q58272">
    <property type="interactions" value="22"/>
</dbReference>
<dbReference type="STRING" id="243232.MJ_0862"/>
<dbReference type="PaxDb" id="243232-MJ_0862"/>
<dbReference type="EnsemblBacteria" id="AAB98867">
    <property type="protein sequence ID" value="AAB98867"/>
    <property type="gene ID" value="MJ_0862"/>
</dbReference>
<dbReference type="GeneID" id="1451751"/>
<dbReference type="KEGG" id="mja:MJ_0862"/>
<dbReference type="eggNOG" id="arCOG00613">
    <property type="taxonomic scope" value="Archaea"/>
</dbReference>
<dbReference type="HOGENOM" id="CLU_065515_1_0_2"/>
<dbReference type="InParanoid" id="Q58272"/>
<dbReference type="OrthoDB" id="371955at2157"/>
<dbReference type="PhylomeDB" id="Q58272"/>
<dbReference type="BioCyc" id="MetaCyc:MONOMER-21126"/>
<dbReference type="Proteomes" id="UP000000805">
    <property type="component" value="Chromosome"/>
</dbReference>
<dbReference type="GO" id="GO:0005737">
    <property type="term" value="C:cytoplasm"/>
    <property type="evidence" value="ECO:0007669"/>
    <property type="project" value="UniProtKB-SubCell"/>
</dbReference>
<dbReference type="GO" id="GO:0010181">
    <property type="term" value="F:FMN binding"/>
    <property type="evidence" value="ECO:0007669"/>
    <property type="project" value="UniProtKB-UniRule"/>
</dbReference>
<dbReference type="GO" id="GO:0004452">
    <property type="term" value="F:isopentenyl-diphosphate delta-isomerase activity"/>
    <property type="evidence" value="ECO:0007669"/>
    <property type="project" value="UniProtKB-UniRule"/>
</dbReference>
<dbReference type="GO" id="GO:0000287">
    <property type="term" value="F:magnesium ion binding"/>
    <property type="evidence" value="ECO:0007669"/>
    <property type="project" value="UniProtKB-UniRule"/>
</dbReference>
<dbReference type="GO" id="GO:0070402">
    <property type="term" value="F:NADPH binding"/>
    <property type="evidence" value="ECO:0007669"/>
    <property type="project" value="UniProtKB-UniRule"/>
</dbReference>
<dbReference type="GO" id="GO:0016491">
    <property type="term" value="F:oxidoreductase activity"/>
    <property type="evidence" value="ECO:0007669"/>
    <property type="project" value="InterPro"/>
</dbReference>
<dbReference type="GO" id="GO:0008299">
    <property type="term" value="P:isoprenoid biosynthetic process"/>
    <property type="evidence" value="ECO:0007669"/>
    <property type="project" value="UniProtKB-UniRule"/>
</dbReference>
<dbReference type="CDD" id="cd02811">
    <property type="entry name" value="IDI-2_FMN"/>
    <property type="match status" value="1"/>
</dbReference>
<dbReference type="Gene3D" id="3.20.20.70">
    <property type="entry name" value="Aldolase class I"/>
    <property type="match status" value="1"/>
</dbReference>
<dbReference type="HAMAP" id="MF_00354">
    <property type="entry name" value="Idi_2"/>
    <property type="match status" value="1"/>
</dbReference>
<dbReference type="InterPro" id="IPR013785">
    <property type="entry name" value="Aldolase_TIM"/>
</dbReference>
<dbReference type="InterPro" id="IPR000262">
    <property type="entry name" value="FMN-dep_DH"/>
</dbReference>
<dbReference type="InterPro" id="IPR011179">
    <property type="entry name" value="IPdP_isomerase"/>
</dbReference>
<dbReference type="NCBIfam" id="TIGR02151">
    <property type="entry name" value="IPP_isom_2"/>
    <property type="match status" value="1"/>
</dbReference>
<dbReference type="PANTHER" id="PTHR43665">
    <property type="entry name" value="ISOPENTENYL-DIPHOSPHATE DELTA-ISOMERASE"/>
    <property type="match status" value="1"/>
</dbReference>
<dbReference type="PANTHER" id="PTHR43665:SF1">
    <property type="entry name" value="ISOPENTENYL-DIPHOSPHATE DELTA-ISOMERASE"/>
    <property type="match status" value="1"/>
</dbReference>
<dbReference type="Pfam" id="PF01070">
    <property type="entry name" value="FMN_dh"/>
    <property type="match status" value="1"/>
</dbReference>
<dbReference type="PIRSF" id="PIRSF003314">
    <property type="entry name" value="IPP_isomerase"/>
    <property type="match status" value="1"/>
</dbReference>
<dbReference type="SUPFAM" id="SSF51395">
    <property type="entry name" value="FMN-linked oxidoreductases"/>
    <property type="match status" value="1"/>
</dbReference>
<proteinExistence type="evidence at protein level"/>
<protein>
    <recommendedName>
        <fullName evidence="1">Isopentenyl-diphosphate delta-isomerase</fullName>
        <shortName evidence="1">IPP isomerase</shortName>
        <ecNumber evidence="1">5.3.3.2</ecNumber>
    </recommendedName>
    <alternativeName>
        <fullName evidence="1">Isopentenyl diphosphate:dimethylallyl diphosphate isomerase</fullName>
    </alternativeName>
    <alternativeName>
        <fullName evidence="1">Isopentenyl pyrophosphate isomerase</fullName>
    </alternativeName>
    <alternativeName>
        <fullName evidence="1">Type 2 isopentenyl diphosphate isomerase</fullName>
        <shortName evidence="1">IDI-2</shortName>
    </alternativeName>
</protein>
<keyword id="KW-0963">Cytoplasm</keyword>
<keyword id="KW-0285">Flavoprotein</keyword>
<keyword id="KW-0288">FMN</keyword>
<keyword id="KW-0413">Isomerase</keyword>
<keyword id="KW-0414">Isoprene biosynthesis</keyword>
<keyword id="KW-0460">Magnesium</keyword>
<keyword id="KW-0479">Metal-binding</keyword>
<keyword id="KW-0521">NADP</keyword>
<keyword id="KW-1185">Reference proteome</keyword>